<accession>O21078</accession>
<accession>O63918</accession>
<evidence type="ECO:0000250" key="1"/>
<evidence type="ECO:0000255" key="2"/>
<evidence type="ECO:0000305" key="3"/>
<sequence>MMTLILILGIFLGTMTTMFSSSWFFAWLGLEINMMAIIPMMLFPLSQRALESSMKYFISQAVASSTIILASSWNYFSSGQWTISFMSDNLAITLIILALLLKLGLAPLHFWLPEVLQGVNLHMGLIISTWQKLAPLTLLIQVSSNLNNMYILISISVMSVLAGGFGGLNQTQLRKLLAYSSISHMGWIVGVMAVSASLSWVTTVIYLIINFSIFTILIELNSTKISDLMLSWSKTSWSHTKCILVLLSLGGLPPFTGFFLKLSISNALISNSLILMTILLMAGSLISLFFYLRLSFMTALLLAPTNLQIKGTWKSPHYSNLLFNLMFLFSILLLPLSPFMISLFQISW</sequence>
<proteinExistence type="inferred from homology"/>
<feature type="chain" id="PRO_0000117610" description="NADH-ubiquinone oxidoreductase chain 2">
    <location>
        <begin position="1"/>
        <end position="348"/>
    </location>
</feature>
<feature type="transmembrane region" description="Helical" evidence="2">
    <location>
        <begin position="1"/>
        <end position="21"/>
    </location>
</feature>
<feature type="transmembrane region" description="Helical" evidence="2">
    <location>
        <begin position="23"/>
        <end position="43"/>
    </location>
</feature>
<feature type="transmembrane region" description="Helical" evidence="2">
    <location>
        <begin position="56"/>
        <end position="76"/>
    </location>
</feature>
<feature type="transmembrane region" description="Helical" evidence="2">
    <location>
        <begin position="92"/>
        <end position="112"/>
    </location>
</feature>
<feature type="transmembrane region" description="Helical" evidence="2">
    <location>
        <begin position="123"/>
        <end position="143"/>
    </location>
</feature>
<feature type="transmembrane region" description="Helical" evidence="2">
    <location>
        <begin position="148"/>
        <end position="168"/>
    </location>
</feature>
<feature type="transmembrane region" description="Helical" evidence="2">
    <location>
        <begin position="176"/>
        <end position="196"/>
    </location>
</feature>
<feature type="transmembrane region" description="Helical" evidence="2">
    <location>
        <begin position="198"/>
        <end position="218"/>
    </location>
</feature>
<feature type="transmembrane region" description="Helical" evidence="2">
    <location>
        <begin position="242"/>
        <end position="262"/>
    </location>
</feature>
<feature type="transmembrane region" description="Helical" evidence="2">
    <location>
        <begin position="272"/>
        <end position="292"/>
    </location>
</feature>
<feature type="transmembrane region" description="Helical" evidence="2">
    <location>
        <begin position="321"/>
        <end position="341"/>
    </location>
</feature>
<feature type="sequence conflict" description="In Ref. 2; CAA75486." evidence="3" ref="2">
    <original>I</original>
    <variation>V</variation>
    <location>
        <position position="205"/>
    </location>
</feature>
<feature type="sequence conflict" description="In Ref. 2; CAA75486." evidence="3" ref="2">
    <original>S</original>
    <variation>C</variation>
    <location>
        <position position="315"/>
    </location>
</feature>
<geneLocation type="mitochondrion"/>
<reference key="1">
    <citation type="journal article" date="1997" name="Mol. Biol. Evol.">
        <title>The main features of the craniate mitochondrial DNA between the ND1 and the COI genes were established in the common ancestor with the lancelet.</title>
        <authorList>
            <person name="Delarbre C."/>
            <person name="Barriel V."/>
            <person name="Tillier S."/>
            <person name="Janvier P."/>
            <person name="Gachelin G."/>
        </authorList>
    </citation>
    <scope>NUCLEOTIDE SEQUENCE [GENOMIC DNA]</scope>
</reference>
<reference key="2">
    <citation type="journal article" date="1998" name="J. Mol. Evol.">
        <title>The mitochondrial DNA molecule of the hagfish (Myxine glutinosa) and vertebrate phylogeny.</title>
        <authorList>
            <person name="Rasmussen A.S."/>
            <person name="Janke A."/>
            <person name="Arnason U."/>
        </authorList>
    </citation>
    <scope>NUCLEOTIDE SEQUENCE [GENOMIC DNA]</scope>
</reference>
<reference key="3">
    <citation type="journal article" date="2001" name="J. Mol. Evol.">
        <title>The complete mitochondrial genome of the hagfish Myxine glutinosa: unique features of the control region.</title>
        <authorList>
            <person name="Delarbre C."/>
            <person name="Rasmussen A.S."/>
            <person name="Arnason U."/>
            <person name="Gachelin G."/>
        </authorList>
    </citation>
    <scope>NUCLEOTIDE SEQUENCE [GENOMIC DNA]</scope>
</reference>
<gene>
    <name type="primary">MT-ND2</name>
    <name type="synonym">MTND2</name>
    <name type="synonym">NADH2</name>
    <name type="synonym">ND2</name>
</gene>
<comment type="function">
    <text evidence="1">Core subunit of the mitochondrial membrane respiratory chain NADH dehydrogenase (Complex I) that is believed to belong to the minimal assembly required for catalysis. Complex I functions in the transfer of electrons from NADH to the respiratory chain. The immediate electron acceptor for the enzyme is believed to be ubiquinone (By similarity).</text>
</comment>
<comment type="catalytic activity">
    <reaction>
        <text>a ubiquinone + NADH + 5 H(+)(in) = a ubiquinol + NAD(+) + 4 H(+)(out)</text>
        <dbReference type="Rhea" id="RHEA:29091"/>
        <dbReference type="Rhea" id="RHEA-COMP:9565"/>
        <dbReference type="Rhea" id="RHEA-COMP:9566"/>
        <dbReference type="ChEBI" id="CHEBI:15378"/>
        <dbReference type="ChEBI" id="CHEBI:16389"/>
        <dbReference type="ChEBI" id="CHEBI:17976"/>
        <dbReference type="ChEBI" id="CHEBI:57540"/>
        <dbReference type="ChEBI" id="CHEBI:57945"/>
        <dbReference type="EC" id="7.1.1.2"/>
    </reaction>
</comment>
<comment type="subcellular location">
    <subcellularLocation>
        <location>Mitochondrion inner membrane</location>
        <topology>Multi-pass membrane protein</topology>
    </subcellularLocation>
</comment>
<comment type="similarity">
    <text evidence="3">Belongs to the complex I subunit 2 family.</text>
</comment>
<protein>
    <recommendedName>
        <fullName>NADH-ubiquinone oxidoreductase chain 2</fullName>
        <ecNumber>7.1.1.2</ecNumber>
    </recommendedName>
    <alternativeName>
        <fullName>NADH dehydrogenase subunit 2</fullName>
    </alternativeName>
</protein>
<name>NU2M_MYXGL</name>
<organism>
    <name type="scientific">Myxine glutinosa</name>
    <name type="common">Atlantic hagfish</name>
    <dbReference type="NCBI Taxonomy" id="7769"/>
    <lineage>
        <taxon>Eukaryota</taxon>
        <taxon>Metazoa</taxon>
        <taxon>Chordata</taxon>
        <taxon>Craniata</taxon>
        <taxon>Vertebrata</taxon>
        <taxon>Cyclostomata</taxon>
        <taxon>Myxini</taxon>
        <taxon>Myxiniformes</taxon>
        <taxon>Myxinidae</taxon>
        <taxon>Myxininae</taxon>
        <taxon>Myxine</taxon>
    </lineage>
</organism>
<dbReference type="EC" id="7.1.1.2"/>
<dbReference type="EMBL" id="Y09527">
    <property type="protein sequence ID" value="CAA70717.1"/>
    <property type="molecule type" value="Genomic_DNA"/>
</dbReference>
<dbReference type="EMBL" id="Y15187">
    <property type="protein sequence ID" value="CAA75486.1"/>
    <property type="molecule type" value="Genomic_DNA"/>
</dbReference>
<dbReference type="EMBL" id="AJ404477">
    <property type="protein sequence ID" value="CAC20650.1"/>
    <property type="molecule type" value="Genomic_DNA"/>
</dbReference>
<dbReference type="PIR" id="T13817">
    <property type="entry name" value="T13817"/>
</dbReference>
<dbReference type="RefSeq" id="NP_073274.1">
    <property type="nucleotide sequence ID" value="NC_002639.1"/>
</dbReference>
<dbReference type="SMR" id="O21078"/>
<dbReference type="GeneID" id="802344"/>
<dbReference type="CTD" id="4536"/>
<dbReference type="GO" id="GO:0005743">
    <property type="term" value="C:mitochondrial inner membrane"/>
    <property type="evidence" value="ECO:0007669"/>
    <property type="project" value="UniProtKB-SubCell"/>
</dbReference>
<dbReference type="GO" id="GO:0008137">
    <property type="term" value="F:NADH dehydrogenase (ubiquinone) activity"/>
    <property type="evidence" value="ECO:0007669"/>
    <property type="project" value="UniProtKB-EC"/>
</dbReference>
<dbReference type="GO" id="GO:0006120">
    <property type="term" value="P:mitochondrial electron transport, NADH to ubiquinone"/>
    <property type="evidence" value="ECO:0007669"/>
    <property type="project" value="InterPro"/>
</dbReference>
<dbReference type="InterPro" id="IPR050175">
    <property type="entry name" value="Complex_I_Subunit_2"/>
</dbReference>
<dbReference type="InterPro" id="IPR010933">
    <property type="entry name" value="NADH_DH_su2_C"/>
</dbReference>
<dbReference type="InterPro" id="IPR003917">
    <property type="entry name" value="NADH_UbQ_OxRdtase_chain2"/>
</dbReference>
<dbReference type="InterPro" id="IPR001750">
    <property type="entry name" value="ND/Mrp_TM"/>
</dbReference>
<dbReference type="PANTHER" id="PTHR46552">
    <property type="entry name" value="NADH-UBIQUINONE OXIDOREDUCTASE CHAIN 2"/>
    <property type="match status" value="1"/>
</dbReference>
<dbReference type="PANTHER" id="PTHR46552:SF1">
    <property type="entry name" value="NADH-UBIQUINONE OXIDOREDUCTASE CHAIN 2"/>
    <property type="match status" value="1"/>
</dbReference>
<dbReference type="Pfam" id="PF06444">
    <property type="entry name" value="NADH_dehy_S2_C"/>
    <property type="match status" value="1"/>
</dbReference>
<dbReference type="Pfam" id="PF00361">
    <property type="entry name" value="Proton_antipo_M"/>
    <property type="match status" value="1"/>
</dbReference>
<dbReference type="PRINTS" id="PR01436">
    <property type="entry name" value="NADHDHGNASE2"/>
</dbReference>
<keyword id="KW-0249">Electron transport</keyword>
<keyword id="KW-0472">Membrane</keyword>
<keyword id="KW-0496">Mitochondrion</keyword>
<keyword id="KW-0999">Mitochondrion inner membrane</keyword>
<keyword id="KW-0520">NAD</keyword>
<keyword id="KW-0679">Respiratory chain</keyword>
<keyword id="KW-1278">Translocase</keyword>
<keyword id="KW-0812">Transmembrane</keyword>
<keyword id="KW-1133">Transmembrane helix</keyword>
<keyword id="KW-0813">Transport</keyword>
<keyword id="KW-0830">Ubiquinone</keyword>